<accession>P52963</accession>
<accession>Q91VX6</accession>
<gene>
    <name evidence="6" type="primary">Epb41l4a</name>
    <name type="synonym">Epb4.1l4</name>
    <name evidence="6" type="synonym">Epb4.1l4a</name>
    <name type="synonym">Epb41l4</name>
</gene>
<comment type="subcellular location">
    <subcellularLocation>
        <location evidence="1">Cytoplasm</location>
        <location evidence="1">Cytoskeleton</location>
    </subcellularLocation>
</comment>
<comment type="tissue specificity">
    <text>Brain, heart, lung, liver and spleen. Not detected in thymus and kidney.</text>
</comment>
<proteinExistence type="evidence at transcript level"/>
<keyword id="KW-0963">Cytoplasm</keyword>
<keyword id="KW-0206">Cytoskeleton</keyword>
<keyword id="KW-0597">Phosphoprotein</keyword>
<keyword id="KW-1185">Reference proteome</keyword>
<protein>
    <recommendedName>
        <fullName>Band 4.1-like protein 4A</fullName>
    </recommendedName>
    <alternativeName>
        <fullName evidence="6">Erythrocyte membrane protein band 4.1-like 4A</fullName>
    </alternativeName>
    <alternativeName>
        <fullName>Protein NBL4</fullName>
    </alternativeName>
</protein>
<name>E41LA_MOUSE</name>
<dbReference type="EMBL" id="BC007166">
    <property type="protein sequence ID" value="AAH07166.1"/>
    <property type="molecule type" value="mRNA"/>
</dbReference>
<dbReference type="EMBL" id="BC013557">
    <property type="protein sequence ID" value="AAH13557.1"/>
    <property type="molecule type" value="mRNA"/>
</dbReference>
<dbReference type="EMBL" id="D28818">
    <property type="protein sequence ID" value="BAA05978.1"/>
    <property type="molecule type" value="mRNA"/>
</dbReference>
<dbReference type="CCDS" id="CCDS29124.1"/>
<dbReference type="PIR" id="I55505">
    <property type="entry name" value="JU0188"/>
</dbReference>
<dbReference type="RefSeq" id="NP_038540.2">
    <property type="nucleotide sequence ID" value="NM_013512.2"/>
</dbReference>
<dbReference type="SMR" id="P52963"/>
<dbReference type="BioGRID" id="199462">
    <property type="interactions" value="11"/>
</dbReference>
<dbReference type="FunCoup" id="P52963">
    <property type="interactions" value="176"/>
</dbReference>
<dbReference type="STRING" id="10090.ENSMUSP00000025234"/>
<dbReference type="iPTMnet" id="P52963"/>
<dbReference type="PhosphoSitePlus" id="P52963"/>
<dbReference type="PaxDb" id="10090-ENSMUSP00000025234"/>
<dbReference type="PeptideAtlas" id="P52963"/>
<dbReference type="ProteomicsDB" id="277746"/>
<dbReference type="Antibodypedia" id="25339">
    <property type="antibodies" value="108 antibodies from 20 providers"/>
</dbReference>
<dbReference type="DNASU" id="13824"/>
<dbReference type="Ensembl" id="ENSMUST00000025234.7">
    <property type="protein sequence ID" value="ENSMUSP00000025234.6"/>
    <property type="gene ID" value="ENSMUSG00000024376.8"/>
</dbReference>
<dbReference type="GeneID" id="13824"/>
<dbReference type="KEGG" id="mmu:13824"/>
<dbReference type="UCSC" id="uc008ejx.1">
    <property type="organism name" value="mouse"/>
</dbReference>
<dbReference type="AGR" id="MGI:103007"/>
<dbReference type="CTD" id="64097"/>
<dbReference type="MGI" id="MGI:103007">
    <property type="gene designation" value="Epb41l4a"/>
</dbReference>
<dbReference type="VEuPathDB" id="HostDB:ENSMUSG00000024376"/>
<dbReference type="eggNOG" id="KOG3530">
    <property type="taxonomic scope" value="Eukaryota"/>
</dbReference>
<dbReference type="GeneTree" id="ENSGT00940000159623"/>
<dbReference type="HOGENOM" id="CLU_003623_7_0_1"/>
<dbReference type="InParanoid" id="P52963"/>
<dbReference type="OMA" id="KHGRRIY"/>
<dbReference type="OrthoDB" id="6235974at2759"/>
<dbReference type="PhylomeDB" id="P52963"/>
<dbReference type="TreeFam" id="TF319780"/>
<dbReference type="BioGRID-ORCS" id="13824">
    <property type="hits" value="1 hit in 45 CRISPR screens"/>
</dbReference>
<dbReference type="ChiTaRS" id="Epb41l4a">
    <property type="organism name" value="mouse"/>
</dbReference>
<dbReference type="PRO" id="PR:P52963"/>
<dbReference type="Proteomes" id="UP000000589">
    <property type="component" value="Chromosome 18"/>
</dbReference>
<dbReference type="RNAct" id="P52963">
    <property type="molecule type" value="protein"/>
</dbReference>
<dbReference type="Bgee" id="ENSMUSG00000024376">
    <property type="expression patterns" value="Expressed in epithelium of lens and 215 other cell types or tissues"/>
</dbReference>
<dbReference type="GO" id="GO:0005737">
    <property type="term" value="C:cytoplasm"/>
    <property type="evidence" value="ECO:0007669"/>
    <property type="project" value="UniProtKB-KW"/>
</dbReference>
<dbReference type="GO" id="GO:0005856">
    <property type="term" value="C:cytoskeleton"/>
    <property type="evidence" value="ECO:0007669"/>
    <property type="project" value="UniProtKB-SubCell"/>
</dbReference>
<dbReference type="GO" id="GO:0008092">
    <property type="term" value="F:cytoskeletal protein binding"/>
    <property type="evidence" value="ECO:0007669"/>
    <property type="project" value="InterPro"/>
</dbReference>
<dbReference type="CDD" id="cd14473">
    <property type="entry name" value="FERM_B-lobe"/>
    <property type="match status" value="1"/>
</dbReference>
<dbReference type="CDD" id="cd13186">
    <property type="entry name" value="FERM_C_NBL4_NBL5"/>
    <property type="match status" value="1"/>
</dbReference>
<dbReference type="CDD" id="cd17107">
    <property type="entry name" value="FERM_F1_EPB41L4A"/>
    <property type="match status" value="1"/>
</dbReference>
<dbReference type="FunFam" id="3.10.20.90:FF:000116">
    <property type="entry name" value="band 4.1-like protein 4A isoform X1"/>
    <property type="match status" value="1"/>
</dbReference>
<dbReference type="FunFam" id="2.30.29.30:FF:000002">
    <property type="entry name" value="Band 4.1-like protein 5 isoform 1"/>
    <property type="match status" value="1"/>
</dbReference>
<dbReference type="FunFam" id="1.20.80.10:FF:000003">
    <property type="entry name" value="Tyrosine-protein phosphatase non-receptor type 4"/>
    <property type="match status" value="1"/>
</dbReference>
<dbReference type="Gene3D" id="1.20.80.10">
    <property type="match status" value="1"/>
</dbReference>
<dbReference type="Gene3D" id="3.10.20.90">
    <property type="entry name" value="Phosphatidylinositol 3-kinase Catalytic Subunit, Chain A, domain 1"/>
    <property type="match status" value="1"/>
</dbReference>
<dbReference type="Gene3D" id="2.30.29.30">
    <property type="entry name" value="Pleckstrin-homology domain (PH domain)/Phosphotyrosine-binding domain (PTB)"/>
    <property type="match status" value="1"/>
</dbReference>
<dbReference type="InterPro" id="IPR030696">
    <property type="entry name" value="Band4.1-like4A_FERM_F1"/>
</dbReference>
<dbReference type="InterPro" id="IPR019749">
    <property type="entry name" value="Band_41_domain"/>
</dbReference>
<dbReference type="InterPro" id="IPR000798">
    <property type="entry name" value="Ez/rad/moesin-like"/>
</dbReference>
<dbReference type="InterPro" id="IPR014847">
    <property type="entry name" value="FA"/>
</dbReference>
<dbReference type="InterPro" id="IPR014352">
    <property type="entry name" value="FERM/acyl-CoA-bd_prot_sf"/>
</dbReference>
<dbReference type="InterPro" id="IPR035963">
    <property type="entry name" value="FERM_2"/>
</dbReference>
<dbReference type="InterPro" id="IPR019748">
    <property type="entry name" value="FERM_central"/>
</dbReference>
<dbReference type="InterPro" id="IPR019747">
    <property type="entry name" value="FERM_CS"/>
</dbReference>
<dbReference type="InterPro" id="IPR000299">
    <property type="entry name" value="FERM_domain"/>
</dbReference>
<dbReference type="InterPro" id="IPR018979">
    <property type="entry name" value="FERM_N"/>
</dbReference>
<dbReference type="InterPro" id="IPR018980">
    <property type="entry name" value="FERM_PH-like_C"/>
</dbReference>
<dbReference type="InterPro" id="IPR011993">
    <property type="entry name" value="PH-like_dom_sf"/>
</dbReference>
<dbReference type="InterPro" id="IPR029071">
    <property type="entry name" value="Ubiquitin-like_domsf"/>
</dbReference>
<dbReference type="PANTHER" id="PTHR23280">
    <property type="entry name" value="4.1 G PROTEIN"/>
    <property type="match status" value="1"/>
</dbReference>
<dbReference type="PANTHER" id="PTHR23280:SF4">
    <property type="entry name" value="BAND 4.1-LIKE PROTEIN 4A"/>
    <property type="match status" value="1"/>
</dbReference>
<dbReference type="Pfam" id="PF08736">
    <property type="entry name" value="FA"/>
    <property type="match status" value="1"/>
</dbReference>
<dbReference type="Pfam" id="PF09380">
    <property type="entry name" value="FERM_C"/>
    <property type="match status" value="1"/>
</dbReference>
<dbReference type="Pfam" id="PF00373">
    <property type="entry name" value="FERM_M"/>
    <property type="match status" value="1"/>
</dbReference>
<dbReference type="Pfam" id="PF09379">
    <property type="entry name" value="FERM_N"/>
    <property type="match status" value="1"/>
</dbReference>
<dbReference type="PRINTS" id="PR00935">
    <property type="entry name" value="BAND41"/>
</dbReference>
<dbReference type="PRINTS" id="PR00661">
    <property type="entry name" value="ERMFAMILY"/>
</dbReference>
<dbReference type="SMART" id="SM00295">
    <property type="entry name" value="B41"/>
    <property type="match status" value="1"/>
</dbReference>
<dbReference type="SMART" id="SM01195">
    <property type="entry name" value="FA"/>
    <property type="match status" value="1"/>
</dbReference>
<dbReference type="SMART" id="SM01196">
    <property type="entry name" value="FERM_C"/>
    <property type="match status" value="1"/>
</dbReference>
<dbReference type="SUPFAM" id="SSF50729">
    <property type="entry name" value="PH domain-like"/>
    <property type="match status" value="1"/>
</dbReference>
<dbReference type="SUPFAM" id="SSF47031">
    <property type="entry name" value="Second domain of FERM"/>
    <property type="match status" value="1"/>
</dbReference>
<dbReference type="SUPFAM" id="SSF54236">
    <property type="entry name" value="Ubiquitin-like"/>
    <property type="match status" value="1"/>
</dbReference>
<dbReference type="PROSITE" id="PS00660">
    <property type="entry name" value="FERM_1"/>
    <property type="match status" value="1"/>
</dbReference>
<dbReference type="PROSITE" id="PS00661">
    <property type="entry name" value="FERM_2"/>
    <property type="match status" value="1"/>
</dbReference>
<dbReference type="PROSITE" id="PS50057">
    <property type="entry name" value="FERM_3"/>
    <property type="match status" value="1"/>
</dbReference>
<sequence>MGCFCAVPEEFYCEVLLLDESKLTLTTQQQGIKKSTKGSVVLDHVFRHINLVEIDYFGLRYCDRSHQTYWLDPAKTLAEHKELINTGPPYTLYFGIKFYAEDPCKLKEEITRYQFFLQVKQDALQGRLPCPVNIAAQMGAYAIQAELGDHDPYKHTAGYVSEYRFVPDQKEELEEAIERIHKTLMGQAPSEAELNYLRTAKSLEMYGVDLHPVYGENKSEYFLGLTPSGVVVYKNKKQVGKYFWPRITKVHFKETQFELRVLGKDCNETSFFFEARSKTACKHLWKCSVEHHTFFRMPDTESNSLSRKLSKFGSISYKHRYSGRTALQMSRDLSIQLPRPNQNVVRSRSKTYPKRVAQTQPTGSNNINRITANTENGENEGTTKIIAPSPVKSFKKAKNENSPDPQRSKSHAPWEENGPQSGLYNSSSDRTKSPKFPCARQRNLSCGSDNDSSQLMRRRKAHNSGEDSDLKQRRRSRSRCNTSSGSESENSNREHRKKRNRTRQENDMVDSGPQWEAVLRRQKEKNQADPNNRRSRHRSRSRSPDIQAKEELWKHIQKELVDPSGLSEEQLKEIPYTKVETQGDPVRIRHSHSPRSYRQYRRSQCSDGERSVLSEVNSKTDLVPPLPVTRSSDAQGSGGSTVHQRRNGSKDSLIEEKSQLSTINPAGKPTAKTIKTIQAARLKAET</sequence>
<feature type="chain" id="PRO_0000219402" description="Band 4.1-like protein 4A">
    <location>
        <begin position="1"/>
        <end position="686"/>
    </location>
</feature>
<feature type="domain" description="FERM" evidence="3">
    <location>
        <begin position="11"/>
        <end position="299"/>
    </location>
</feature>
<feature type="region of interest" description="Disordered" evidence="4">
    <location>
        <begin position="332"/>
        <end position="669"/>
    </location>
</feature>
<feature type="compositionally biased region" description="Polar residues" evidence="4">
    <location>
        <begin position="332"/>
        <end position="346"/>
    </location>
</feature>
<feature type="compositionally biased region" description="Polar residues" evidence="4">
    <location>
        <begin position="357"/>
        <end position="382"/>
    </location>
</feature>
<feature type="compositionally biased region" description="Polar residues" evidence="4">
    <location>
        <begin position="418"/>
        <end position="428"/>
    </location>
</feature>
<feature type="compositionally biased region" description="Polar residues" evidence="4">
    <location>
        <begin position="442"/>
        <end position="455"/>
    </location>
</feature>
<feature type="compositionally biased region" description="Low complexity" evidence="4">
    <location>
        <begin position="479"/>
        <end position="489"/>
    </location>
</feature>
<feature type="compositionally biased region" description="Basic and acidic residues" evidence="4">
    <location>
        <begin position="518"/>
        <end position="527"/>
    </location>
</feature>
<feature type="compositionally biased region" description="Basic and acidic residues" evidence="4">
    <location>
        <begin position="547"/>
        <end position="561"/>
    </location>
</feature>
<feature type="compositionally biased region" description="Basic residues" evidence="4">
    <location>
        <begin position="588"/>
        <end position="601"/>
    </location>
</feature>
<feature type="compositionally biased region" description="Basic and acidic residues" evidence="4">
    <location>
        <begin position="648"/>
        <end position="658"/>
    </location>
</feature>
<feature type="modified residue" description="Phosphoserine" evidence="2">
    <location>
        <position position="304"/>
    </location>
</feature>
<feature type="modified residue" description="Phosphoserine" evidence="2">
    <location>
        <position position="389"/>
    </location>
</feature>
<feature type="modified residue" description="Phosphoserine" evidence="2">
    <location>
        <position position="393"/>
    </location>
</feature>
<feature type="modified residue" description="Phosphoserine" evidence="2">
    <location>
        <position position="402"/>
    </location>
</feature>
<feature type="sequence conflict" description="In Ref. 2; BAA05978." evidence="5" ref="2">
    <location>
        <begin position="322"/>
        <end position="323"/>
    </location>
</feature>
<organism>
    <name type="scientific">Mus musculus</name>
    <name type="common">Mouse</name>
    <dbReference type="NCBI Taxonomy" id="10090"/>
    <lineage>
        <taxon>Eukaryota</taxon>
        <taxon>Metazoa</taxon>
        <taxon>Chordata</taxon>
        <taxon>Craniata</taxon>
        <taxon>Vertebrata</taxon>
        <taxon>Euteleostomi</taxon>
        <taxon>Mammalia</taxon>
        <taxon>Eutheria</taxon>
        <taxon>Euarchontoglires</taxon>
        <taxon>Glires</taxon>
        <taxon>Rodentia</taxon>
        <taxon>Myomorpha</taxon>
        <taxon>Muroidea</taxon>
        <taxon>Muridae</taxon>
        <taxon>Murinae</taxon>
        <taxon>Mus</taxon>
        <taxon>Mus</taxon>
    </lineage>
</organism>
<reference key="1">
    <citation type="journal article" date="2004" name="Genome Res.">
        <title>The status, quality, and expansion of the NIH full-length cDNA project: the Mammalian Gene Collection (MGC).</title>
        <authorList>
            <consortium name="The MGC Project Team"/>
        </authorList>
    </citation>
    <scope>NUCLEOTIDE SEQUENCE [LARGE SCALE MRNA]</scope>
    <source>
        <tissue>Mammary tumor</tissue>
    </source>
</reference>
<reference key="2">
    <citation type="journal article" date="1994" name="J. Cell Sci.">
        <title>Structural diversity of band 4.1 superfamily members.</title>
        <authorList>
            <person name="Takeuchi K."/>
            <person name="Kawashima A."/>
            <person name="Nagafuchi A."/>
            <person name="Tsukita S."/>
        </authorList>
    </citation>
    <scope>NUCLEOTIDE SEQUENCE [MRNA] OF 1-556</scope>
</reference>
<evidence type="ECO:0000250" key="1"/>
<evidence type="ECO:0000250" key="2">
    <source>
        <dbReference type="UniProtKB" id="Q9HCS5"/>
    </source>
</evidence>
<evidence type="ECO:0000255" key="3">
    <source>
        <dbReference type="PROSITE-ProRule" id="PRU00084"/>
    </source>
</evidence>
<evidence type="ECO:0000256" key="4">
    <source>
        <dbReference type="SAM" id="MobiDB-lite"/>
    </source>
</evidence>
<evidence type="ECO:0000305" key="5"/>
<evidence type="ECO:0000312" key="6">
    <source>
        <dbReference type="MGI" id="MGI:103007"/>
    </source>
</evidence>